<comment type="function">
    <text evidence="1">Involved in transcription antitermination. Required for transcription of ribosomal RNA (rRNA) genes. Binds specifically to the boxA antiterminator sequence of the ribosomal RNA (rrn) operons.</text>
</comment>
<comment type="similarity">
    <text evidence="1">Belongs to the NusB family.</text>
</comment>
<evidence type="ECO:0000255" key="1">
    <source>
        <dbReference type="HAMAP-Rule" id="MF_00073"/>
    </source>
</evidence>
<evidence type="ECO:0000256" key="2">
    <source>
        <dbReference type="SAM" id="MobiDB-lite"/>
    </source>
</evidence>
<sequence length="165" mass="18716">MISDDTDQFNPRDAKSPEIAKGKSAKRREARQMATQALYQRHMAGHALNEIEAQFRVDNDFSNVDGTYFRELLHGVAINQTEIDTALTPCLDLTIEELDPIELAILRLSTFELLKRIDVPYRVVINEGIELAKVYGSTDGHKFVNGVLDKLAPRLREVEVKAHKR</sequence>
<reference key="1">
    <citation type="journal article" date="2003" name="Proc. Natl. Acad. Sci. U.S.A.">
        <title>The complete genome sequence of the Arabidopsis and tomato pathogen Pseudomonas syringae pv. tomato DC3000.</title>
        <authorList>
            <person name="Buell C.R."/>
            <person name="Joardar V."/>
            <person name="Lindeberg M."/>
            <person name="Selengut J."/>
            <person name="Paulsen I.T."/>
            <person name="Gwinn M.L."/>
            <person name="Dodson R.J."/>
            <person name="DeBoy R.T."/>
            <person name="Durkin A.S."/>
            <person name="Kolonay J.F."/>
            <person name="Madupu R."/>
            <person name="Daugherty S.C."/>
            <person name="Brinkac L.M."/>
            <person name="Beanan M.J."/>
            <person name="Haft D.H."/>
            <person name="Nelson W.C."/>
            <person name="Davidsen T.M."/>
            <person name="Zafar N."/>
            <person name="Zhou L."/>
            <person name="Liu J."/>
            <person name="Yuan Q."/>
            <person name="Khouri H.M."/>
            <person name="Fedorova N.B."/>
            <person name="Tran B."/>
            <person name="Russell D."/>
            <person name="Berry K.J."/>
            <person name="Utterback T.R."/>
            <person name="Van Aken S.E."/>
            <person name="Feldblyum T.V."/>
            <person name="D'Ascenzo M."/>
            <person name="Deng W.-L."/>
            <person name="Ramos A.R."/>
            <person name="Alfano J.R."/>
            <person name="Cartinhour S."/>
            <person name="Chatterjee A.K."/>
            <person name="Delaney T.P."/>
            <person name="Lazarowitz S.G."/>
            <person name="Martin G.B."/>
            <person name="Schneider D.J."/>
            <person name="Tang X."/>
            <person name="Bender C.L."/>
            <person name="White O."/>
            <person name="Fraser C.M."/>
            <person name="Collmer A."/>
        </authorList>
    </citation>
    <scope>NUCLEOTIDE SEQUENCE [LARGE SCALE GENOMIC DNA]</scope>
    <source>
        <strain>ATCC BAA-871 / DC3000</strain>
    </source>
</reference>
<dbReference type="EMBL" id="AE016853">
    <property type="protein sequence ID" value="AAO54236.1"/>
    <property type="molecule type" value="Genomic_DNA"/>
</dbReference>
<dbReference type="RefSeq" id="NP_790541.1">
    <property type="nucleotide sequence ID" value="NC_004578.1"/>
</dbReference>
<dbReference type="RefSeq" id="WP_011103238.1">
    <property type="nucleotide sequence ID" value="NC_004578.1"/>
</dbReference>
<dbReference type="SMR" id="Q889Q5"/>
<dbReference type="STRING" id="223283.PSPTO_0694"/>
<dbReference type="GeneID" id="1182314"/>
<dbReference type="KEGG" id="pst:PSPTO_0694"/>
<dbReference type="PATRIC" id="fig|223283.9.peg.702"/>
<dbReference type="eggNOG" id="COG0781">
    <property type="taxonomic scope" value="Bacteria"/>
</dbReference>
<dbReference type="HOGENOM" id="CLU_087843_4_1_6"/>
<dbReference type="OrthoDB" id="9789556at2"/>
<dbReference type="PhylomeDB" id="Q889Q5"/>
<dbReference type="Proteomes" id="UP000002515">
    <property type="component" value="Chromosome"/>
</dbReference>
<dbReference type="GO" id="GO:0005829">
    <property type="term" value="C:cytosol"/>
    <property type="evidence" value="ECO:0007669"/>
    <property type="project" value="TreeGrafter"/>
</dbReference>
<dbReference type="GO" id="GO:0003723">
    <property type="term" value="F:RNA binding"/>
    <property type="evidence" value="ECO:0007669"/>
    <property type="project" value="UniProtKB-UniRule"/>
</dbReference>
<dbReference type="GO" id="GO:0006353">
    <property type="term" value="P:DNA-templated transcription termination"/>
    <property type="evidence" value="ECO:0007669"/>
    <property type="project" value="UniProtKB-UniRule"/>
</dbReference>
<dbReference type="GO" id="GO:0031564">
    <property type="term" value="P:transcription antitermination"/>
    <property type="evidence" value="ECO:0007669"/>
    <property type="project" value="UniProtKB-KW"/>
</dbReference>
<dbReference type="Gene3D" id="1.10.940.10">
    <property type="entry name" value="NusB-like"/>
    <property type="match status" value="1"/>
</dbReference>
<dbReference type="HAMAP" id="MF_00073">
    <property type="entry name" value="NusB"/>
    <property type="match status" value="1"/>
</dbReference>
<dbReference type="InterPro" id="IPR035926">
    <property type="entry name" value="NusB-like_sf"/>
</dbReference>
<dbReference type="InterPro" id="IPR011605">
    <property type="entry name" value="NusB_fam"/>
</dbReference>
<dbReference type="InterPro" id="IPR006027">
    <property type="entry name" value="NusB_RsmB_TIM44"/>
</dbReference>
<dbReference type="NCBIfam" id="TIGR01951">
    <property type="entry name" value="nusB"/>
    <property type="match status" value="1"/>
</dbReference>
<dbReference type="PANTHER" id="PTHR11078:SF3">
    <property type="entry name" value="ANTITERMINATION NUSB DOMAIN-CONTAINING PROTEIN"/>
    <property type="match status" value="1"/>
</dbReference>
<dbReference type="PANTHER" id="PTHR11078">
    <property type="entry name" value="N UTILIZATION SUBSTANCE PROTEIN B-RELATED"/>
    <property type="match status" value="1"/>
</dbReference>
<dbReference type="Pfam" id="PF01029">
    <property type="entry name" value="NusB"/>
    <property type="match status" value="1"/>
</dbReference>
<dbReference type="SUPFAM" id="SSF48013">
    <property type="entry name" value="NusB-like"/>
    <property type="match status" value="1"/>
</dbReference>
<organism>
    <name type="scientific">Pseudomonas syringae pv. tomato (strain ATCC BAA-871 / DC3000)</name>
    <dbReference type="NCBI Taxonomy" id="223283"/>
    <lineage>
        <taxon>Bacteria</taxon>
        <taxon>Pseudomonadati</taxon>
        <taxon>Pseudomonadota</taxon>
        <taxon>Gammaproteobacteria</taxon>
        <taxon>Pseudomonadales</taxon>
        <taxon>Pseudomonadaceae</taxon>
        <taxon>Pseudomonas</taxon>
    </lineage>
</organism>
<proteinExistence type="inferred from homology"/>
<feature type="chain" id="PRO_0000176566" description="Transcription antitermination protein NusB">
    <location>
        <begin position="1"/>
        <end position="165"/>
    </location>
</feature>
<feature type="region of interest" description="Disordered" evidence="2">
    <location>
        <begin position="1"/>
        <end position="27"/>
    </location>
</feature>
<feature type="compositionally biased region" description="Basic and acidic residues" evidence="2">
    <location>
        <begin position="10"/>
        <end position="21"/>
    </location>
</feature>
<accession>Q889Q5</accession>
<gene>
    <name evidence="1" type="primary">nusB</name>
    <name type="ordered locus">PSPTO_0694</name>
</gene>
<keyword id="KW-1185">Reference proteome</keyword>
<keyword id="KW-0694">RNA-binding</keyword>
<keyword id="KW-0804">Transcription</keyword>
<keyword id="KW-0889">Transcription antitermination</keyword>
<keyword id="KW-0805">Transcription regulation</keyword>
<protein>
    <recommendedName>
        <fullName evidence="1">Transcription antitermination protein NusB</fullName>
    </recommendedName>
    <alternativeName>
        <fullName evidence="1">Antitermination factor NusB</fullName>
    </alternativeName>
</protein>
<name>NUSB_PSESM</name>